<feature type="chain" id="PRO_0000106916" description="Uncharacterized protein MJ0526.1">
    <location>
        <begin position="1"/>
        <end position="82"/>
    </location>
</feature>
<gene>
    <name type="ordered locus">MJ0526.1</name>
</gene>
<evidence type="ECO:0000305" key="1"/>
<name>Y52A_METJA</name>
<keyword id="KW-1185">Reference proteome</keyword>
<sequence length="82" mass="9169">MMDIVEIIIGFIALLMTARIFLERSRARKLLYLCCLSFCISALIALYVDSPMGGIVAITYFICSTISSNAIAYTIEQTKHIE</sequence>
<proteinExistence type="predicted"/>
<dbReference type="EMBL" id="L77117">
    <property type="protein sequence ID" value="AAB98527.1"/>
    <property type="molecule type" value="Genomic_DNA"/>
</dbReference>
<dbReference type="SMR" id="P81309"/>
<dbReference type="FunCoup" id="P81309">
    <property type="interactions" value="4"/>
</dbReference>
<dbReference type="STRING" id="243232.MJ_0526.1"/>
<dbReference type="PaxDb" id="243232-MJ_0526.1"/>
<dbReference type="DNASU" id="1451391"/>
<dbReference type="EnsemblBacteria" id="AAB98527">
    <property type="protein sequence ID" value="AAB98527"/>
    <property type="gene ID" value="MJ_0526.1"/>
</dbReference>
<dbReference type="KEGG" id="mja:MJ_0526.1"/>
<dbReference type="eggNOG" id="arCOG03190">
    <property type="taxonomic scope" value="Archaea"/>
</dbReference>
<dbReference type="HOGENOM" id="CLU_174513_1_0_2"/>
<dbReference type="InParanoid" id="P81309"/>
<dbReference type="Proteomes" id="UP000000805">
    <property type="component" value="Chromosome"/>
</dbReference>
<dbReference type="InterPro" id="IPR019214">
    <property type="entry name" value="DUF2109_membrane"/>
</dbReference>
<dbReference type="InterPro" id="IPR011316">
    <property type="entry name" value="Prd_NiFe_hyd_3_EhaC"/>
</dbReference>
<dbReference type="Pfam" id="PF09882">
    <property type="entry name" value="DUF2109"/>
    <property type="match status" value="1"/>
</dbReference>
<dbReference type="PIRSF" id="PIRSF036534">
    <property type="entry name" value="EhaC"/>
    <property type="match status" value="1"/>
</dbReference>
<organism>
    <name type="scientific">Methanocaldococcus jannaschii (strain ATCC 43067 / DSM 2661 / JAL-1 / JCM 10045 / NBRC 100440)</name>
    <name type="common">Methanococcus jannaschii</name>
    <dbReference type="NCBI Taxonomy" id="243232"/>
    <lineage>
        <taxon>Archaea</taxon>
        <taxon>Methanobacteriati</taxon>
        <taxon>Methanobacteriota</taxon>
        <taxon>Methanomada group</taxon>
        <taxon>Methanococci</taxon>
        <taxon>Methanococcales</taxon>
        <taxon>Methanocaldococcaceae</taxon>
        <taxon>Methanocaldococcus</taxon>
    </lineage>
</organism>
<accession>P81309</accession>
<comment type="similarity">
    <text evidence="1">To M.thermoautotrophicum MTH386.</text>
</comment>
<reference key="1">
    <citation type="journal article" date="1996" name="Science">
        <title>Complete genome sequence of the methanogenic archaeon, Methanococcus jannaschii.</title>
        <authorList>
            <person name="Bult C.J."/>
            <person name="White O."/>
            <person name="Olsen G.J."/>
            <person name="Zhou L."/>
            <person name="Fleischmann R.D."/>
            <person name="Sutton G.G."/>
            <person name="Blake J.A."/>
            <person name="FitzGerald L.M."/>
            <person name="Clayton R.A."/>
            <person name="Gocayne J.D."/>
            <person name="Kerlavage A.R."/>
            <person name="Dougherty B.A."/>
            <person name="Tomb J.-F."/>
            <person name="Adams M.D."/>
            <person name="Reich C.I."/>
            <person name="Overbeek R."/>
            <person name="Kirkness E.F."/>
            <person name="Weinstock K.G."/>
            <person name="Merrick J.M."/>
            <person name="Glodek A."/>
            <person name="Scott J.L."/>
            <person name="Geoghagen N.S.M."/>
            <person name="Weidman J.F."/>
            <person name="Fuhrmann J.L."/>
            <person name="Nguyen D."/>
            <person name="Utterback T.R."/>
            <person name="Kelley J.M."/>
            <person name="Peterson J.D."/>
            <person name="Sadow P.W."/>
            <person name="Hanna M.C."/>
            <person name="Cotton M.D."/>
            <person name="Roberts K.M."/>
            <person name="Hurst M.A."/>
            <person name="Kaine B.P."/>
            <person name="Borodovsky M."/>
            <person name="Klenk H.-P."/>
            <person name="Fraser C.M."/>
            <person name="Smith H.O."/>
            <person name="Woese C.R."/>
            <person name="Venter J.C."/>
        </authorList>
    </citation>
    <scope>NUCLEOTIDE SEQUENCE [LARGE SCALE GENOMIC DNA]</scope>
    <source>
        <strain>ATCC 43067 / DSM 2661 / JAL-1 / JCM 10045 / NBRC 100440</strain>
    </source>
</reference>
<protein>
    <recommendedName>
        <fullName>Uncharacterized protein MJ0526.1</fullName>
    </recommendedName>
</protein>